<feature type="chain" id="PRO_0000141275" description="Cobyrinate a,c-diamide synthase">
    <location>
        <begin position="1"/>
        <end position="441"/>
    </location>
</feature>
<feature type="domain" description="GATase cobBQ-type" evidence="1">
    <location>
        <begin position="243"/>
        <end position="434"/>
    </location>
</feature>
<feature type="active site" description="Nucleophile" evidence="1">
    <location>
        <position position="323"/>
    </location>
</feature>
<feature type="site" description="Increases nucleophilicity of active site Cys" evidence="1">
    <location>
        <position position="426"/>
    </location>
</feature>
<organism>
    <name type="scientific">Halobacterium salinarum (strain ATCC 700922 / JCM 11081 / NRC-1)</name>
    <name type="common">Halobacterium halobium</name>
    <dbReference type="NCBI Taxonomy" id="64091"/>
    <lineage>
        <taxon>Archaea</taxon>
        <taxon>Methanobacteriati</taxon>
        <taxon>Methanobacteriota</taxon>
        <taxon>Stenosarchaea group</taxon>
        <taxon>Halobacteria</taxon>
        <taxon>Halobacteriales</taxon>
        <taxon>Halobacteriaceae</taxon>
        <taxon>Halobacterium</taxon>
        <taxon>Halobacterium salinarum NRC-34001</taxon>
    </lineage>
</organism>
<comment type="function">
    <text evidence="1">Catalyzes the ATP-dependent amidation of the two carboxylate groups at positions a and c of cobyrinate, using either L-glutamine or ammonia as the nitrogen source.</text>
</comment>
<comment type="catalytic activity">
    <reaction evidence="1">
        <text>cob(II)yrinate + 2 L-glutamine + 2 ATP + 2 H2O = cob(II)yrinate a,c diamide + 2 L-glutamate + 2 ADP + 2 phosphate + 2 H(+)</text>
        <dbReference type="Rhea" id="RHEA:26289"/>
        <dbReference type="ChEBI" id="CHEBI:15377"/>
        <dbReference type="ChEBI" id="CHEBI:15378"/>
        <dbReference type="ChEBI" id="CHEBI:29985"/>
        <dbReference type="ChEBI" id="CHEBI:30616"/>
        <dbReference type="ChEBI" id="CHEBI:43474"/>
        <dbReference type="ChEBI" id="CHEBI:58359"/>
        <dbReference type="ChEBI" id="CHEBI:58537"/>
        <dbReference type="ChEBI" id="CHEBI:58894"/>
        <dbReference type="ChEBI" id="CHEBI:456216"/>
        <dbReference type="EC" id="6.3.5.11"/>
    </reaction>
</comment>
<comment type="cofactor">
    <cofactor evidence="1">
        <name>Mg(2+)</name>
        <dbReference type="ChEBI" id="CHEBI:18420"/>
    </cofactor>
</comment>
<comment type="pathway">
    <text evidence="1">Cofactor biosynthesis; adenosylcobalamin biosynthesis; cob(II)yrinate a,c-diamide from sirohydrochlorin (anaerobic route): step 10/10.</text>
</comment>
<comment type="domain">
    <text evidence="1">Comprises of two domains. The C-terminal domain contains the binding site for glutamine and catalyzes the hydrolysis of this substrate to glutamate and ammonia. The N-terminal domain is anticipated to bind ATP and cobyrinate and catalyzes the ultimate synthesis of the diamide product. The ammonia produced via the glutaminase domain is probably translocated to the adjacent domain via a molecular tunnel, where it reacts with an activated intermediate.</text>
</comment>
<comment type="miscellaneous">
    <text evidence="1">The a and c carboxylates of cobyrinate are activated for nucleophilic attack via formation of a phosphorylated intermediate by ATP. CbiA catalyzes first the amidation of the c-carboxylate, and then that of the a-carboxylate.</text>
</comment>
<comment type="similarity">
    <text evidence="1">Belongs to the CobB/CbiA family.</text>
</comment>
<proteinExistence type="inferred from homology"/>
<reference key="1">
    <citation type="journal article" date="2000" name="Proc. Natl. Acad. Sci. U.S.A.">
        <title>Genome sequence of Halobacterium species NRC-1.</title>
        <authorList>
            <person name="Ng W.V."/>
            <person name="Kennedy S.P."/>
            <person name="Mahairas G.G."/>
            <person name="Berquist B."/>
            <person name="Pan M."/>
            <person name="Shukla H.D."/>
            <person name="Lasky S.R."/>
            <person name="Baliga N.S."/>
            <person name="Thorsson V."/>
            <person name="Sbrogna J."/>
            <person name="Swartzell S."/>
            <person name="Weir D."/>
            <person name="Hall J."/>
            <person name="Dahl T.A."/>
            <person name="Welti R."/>
            <person name="Goo Y.A."/>
            <person name="Leithauser B."/>
            <person name="Keller K."/>
            <person name="Cruz R."/>
            <person name="Danson M.J."/>
            <person name="Hough D.W."/>
            <person name="Maddocks D.G."/>
            <person name="Jablonski P.E."/>
            <person name="Krebs M.P."/>
            <person name="Angevine C.M."/>
            <person name="Dale H."/>
            <person name="Isenbarger T.A."/>
            <person name="Peck R.F."/>
            <person name="Pohlschroder M."/>
            <person name="Spudich J.L."/>
            <person name="Jung K.-H."/>
            <person name="Alam M."/>
            <person name="Freitas T."/>
            <person name="Hou S."/>
            <person name="Daniels C.J."/>
            <person name="Dennis P.P."/>
            <person name="Omer A.D."/>
            <person name="Ebhardt H."/>
            <person name="Lowe T.M."/>
            <person name="Liang P."/>
            <person name="Riley M."/>
            <person name="Hood L."/>
            <person name="DasSarma S."/>
        </authorList>
    </citation>
    <scope>NUCLEOTIDE SEQUENCE [LARGE SCALE GENOMIC DNA]</scope>
    <source>
        <strain>ATCC 700922 / JCM 11081 / NRC-1</strain>
    </source>
</reference>
<gene>
    <name evidence="1" type="primary">cbiA</name>
    <name type="ordered locus">VNG_1573G</name>
</gene>
<accession>Q9HPL7</accession>
<dbReference type="EC" id="6.3.5.11" evidence="1"/>
<dbReference type="EMBL" id="AE004437">
    <property type="protein sequence ID" value="AAG19850.1"/>
    <property type="molecule type" value="Genomic_DNA"/>
</dbReference>
<dbReference type="PIR" id="F84310">
    <property type="entry name" value="F84310"/>
</dbReference>
<dbReference type="SMR" id="Q9HPL7"/>
<dbReference type="FunCoup" id="Q9HPL7">
    <property type="interactions" value="67"/>
</dbReference>
<dbReference type="STRING" id="64091.VNG_1573G"/>
<dbReference type="PaxDb" id="64091-VNG_1573G"/>
<dbReference type="KEGG" id="hal:VNG_1573G"/>
<dbReference type="PATRIC" id="fig|64091.14.peg.1203"/>
<dbReference type="HOGENOM" id="CLU_022752_2_0_2"/>
<dbReference type="InParanoid" id="Q9HPL7"/>
<dbReference type="UniPathway" id="UPA00148">
    <property type="reaction ID" value="UER00231"/>
</dbReference>
<dbReference type="Proteomes" id="UP000000554">
    <property type="component" value="Chromosome"/>
</dbReference>
<dbReference type="GO" id="GO:0005524">
    <property type="term" value="F:ATP binding"/>
    <property type="evidence" value="ECO:0007669"/>
    <property type="project" value="UniProtKB-UniRule"/>
</dbReference>
<dbReference type="GO" id="GO:0042242">
    <property type="term" value="F:cobyrinic acid a,c-diamide synthase activity"/>
    <property type="evidence" value="ECO:0007669"/>
    <property type="project" value="UniProtKB-UniRule"/>
</dbReference>
<dbReference type="GO" id="GO:0009236">
    <property type="term" value="P:cobalamin biosynthetic process"/>
    <property type="evidence" value="ECO:0007669"/>
    <property type="project" value="UniProtKB-UniRule"/>
</dbReference>
<dbReference type="CDD" id="cd05388">
    <property type="entry name" value="CobB_N"/>
    <property type="match status" value="1"/>
</dbReference>
<dbReference type="CDD" id="cd03130">
    <property type="entry name" value="GATase1_CobB"/>
    <property type="match status" value="1"/>
</dbReference>
<dbReference type="Gene3D" id="3.40.50.880">
    <property type="match status" value="1"/>
</dbReference>
<dbReference type="Gene3D" id="3.40.50.300">
    <property type="entry name" value="P-loop containing nucleotide triphosphate hydrolases"/>
    <property type="match status" value="1"/>
</dbReference>
<dbReference type="HAMAP" id="MF_00027">
    <property type="entry name" value="CobB_CbiA"/>
    <property type="match status" value="1"/>
</dbReference>
<dbReference type="InterPro" id="IPR004484">
    <property type="entry name" value="CbiA/CobB_synth"/>
</dbReference>
<dbReference type="InterPro" id="IPR029062">
    <property type="entry name" value="Class_I_gatase-like"/>
</dbReference>
<dbReference type="InterPro" id="IPR002586">
    <property type="entry name" value="CobQ/CobB/MinD/ParA_Nub-bd_dom"/>
</dbReference>
<dbReference type="InterPro" id="IPR011698">
    <property type="entry name" value="GATase_3"/>
</dbReference>
<dbReference type="InterPro" id="IPR027417">
    <property type="entry name" value="P-loop_NTPase"/>
</dbReference>
<dbReference type="NCBIfam" id="TIGR00379">
    <property type="entry name" value="cobB"/>
    <property type="match status" value="1"/>
</dbReference>
<dbReference type="NCBIfam" id="NF002204">
    <property type="entry name" value="PRK01077.1"/>
    <property type="match status" value="1"/>
</dbReference>
<dbReference type="NCBIfam" id="NF010471">
    <property type="entry name" value="PRK13896.1"/>
    <property type="match status" value="1"/>
</dbReference>
<dbReference type="PANTHER" id="PTHR43873">
    <property type="entry name" value="COBYRINATE A,C-DIAMIDE SYNTHASE"/>
    <property type="match status" value="1"/>
</dbReference>
<dbReference type="PANTHER" id="PTHR43873:SF1">
    <property type="entry name" value="COBYRINATE A,C-DIAMIDE SYNTHASE"/>
    <property type="match status" value="1"/>
</dbReference>
<dbReference type="Pfam" id="PF01656">
    <property type="entry name" value="CbiA"/>
    <property type="match status" value="1"/>
</dbReference>
<dbReference type="Pfam" id="PF07685">
    <property type="entry name" value="GATase_3"/>
    <property type="match status" value="1"/>
</dbReference>
<dbReference type="SUPFAM" id="SSF52317">
    <property type="entry name" value="Class I glutamine amidotransferase-like"/>
    <property type="match status" value="1"/>
</dbReference>
<dbReference type="SUPFAM" id="SSF52540">
    <property type="entry name" value="P-loop containing nucleoside triphosphate hydrolases"/>
    <property type="match status" value="1"/>
</dbReference>
<dbReference type="PROSITE" id="PS51274">
    <property type="entry name" value="GATASE_COBBQ"/>
    <property type="match status" value="1"/>
</dbReference>
<keyword id="KW-0067">ATP-binding</keyword>
<keyword id="KW-0169">Cobalamin biosynthesis</keyword>
<keyword id="KW-0315">Glutamine amidotransferase</keyword>
<keyword id="KW-0436">Ligase</keyword>
<keyword id="KW-0460">Magnesium</keyword>
<keyword id="KW-0547">Nucleotide-binding</keyword>
<keyword id="KW-1185">Reference proteome</keyword>
<protein>
    <recommendedName>
        <fullName evidence="1">Cobyrinate a,c-diamide synthase</fullName>
        <ecNumber evidence="1">6.3.5.11</ecNumber>
    </recommendedName>
    <alternativeName>
        <fullName evidence="1">Cobyrinic acid a,c-diamide synthetase</fullName>
    </alternativeName>
</protein>
<evidence type="ECO:0000255" key="1">
    <source>
        <dbReference type="HAMAP-Rule" id="MF_00027"/>
    </source>
</evidence>
<name>CBIA_HALSA</name>
<sequence length="441" mass="45485">MTESESASGMDGVVLGGTASGVGKTVATLAVARALADAGHDVQPAKAGPDFIDPSHHEPVVGTPSRSLDPWLSGTDGMRRTYHQGDGDVCVVEGMMGLYDGSVASTARVASELDLPVVLVVDASAGMQSVAATALGFQAYAAEASVDVDVAGVLAQRAHGGRHADGIRDALPDSLTYFGRVPPRDDLDVPDRHLGLHMGSEAAIDDDAVDAAAAHVAAKRIADVARTPPRPPAHDPAPDTGQTVAVADDAAFCFAYPATRERLRERADVVTFSPVAGDDLPACDGVYLPGGYPELHTDALADAPALDTLGARAADGLPVLGECGGLMALAESLTTTDGDTAEMAGVLPADVRMQDRYQALDHVELRATGDTLTAGSGATLRGHEFHYSAATVASDARFAFAVERGDGIDGDHDGLTEYRTLGTYAHVHPESTAFDAFLDAL</sequence>